<protein>
    <recommendedName>
        <fullName evidence="1">MEMO1 family protein TK1477</fullName>
    </recommendedName>
</protein>
<proteinExistence type="inferred from homology"/>
<evidence type="ECO:0000255" key="1">
    <source>
        <dbReference type="HAMAP-Rule" id="MF_00055"/>
    </source>
</evidence>
<feature type="chain" id="PRO_0000134388" description="MEMO1 family protein TK1477">
    <location>
        <begin position="1"/>
        <end position="291"/>
    </location>
</feature>
<reference key="1">
    <citation type="journal article" date="2005" name="Genome Res.">
        <title>Complete genome sequence of the hyperthermophilic archaeon Thermococcus kodakaraensis KOD1 and comparison with Pyrococcus genomes.</title>
        <authorList>
            <person name="Fukui T."/>
            <person name="Atomi H."/>
            <person name="Kanai T."/>
            <person name="Matsumi R."/>
            <person name="Fujiwara S."/>
            <person name="Imanaka T."/>
        </authorList>
    </citation>
    <scope>NUCLEOTIDE SEQUENCE [LARGE SCALE GENOMIC DNA]</scope>
    <source>
        <strain>ATCC BAA-918 / JCM 12380 / KOD1</strain>
    </source>
</reference>
<comment type="similarity">
    <text evidence="1">Belongs to the MEMO1 family.</text>
</comment>
<sequence>MVRYPAVAGSFYPADEELVLMLERFFSDLGEEGNDRRITAGVAPHAGYIFSGYTASRTYKAIFEDGLPETFVILGPNHTGLGSPIAVHPPGTWITPLGEIEVDGELAREIAKISGIADLDDLAHKYEHSIEVQVPFIQYLAEKAGKEVKIVPITLGIQDEDVAEDLGRAIFEASRELGKDVVVIASTDFMHYGQIYGYVPFRARADELPHRIKEWDFRIIRRILDFDVRGMFEEIREMNHTMCGPGGVGTAIVYSRLAGAVEAELLHYTTSFEVSRSTEAVVGYASIVFRR</sequence>
<keyword id="KW-1185">Reference proteome</keyword>
<accession>Q5JJC3</accession>
<dbReference type="EMBL" id="AP006878">
    <property type="protein sequence ID" value="BAD85666.1"/>
    <property type="molecule type" value="Genomic_DNA"/>
</dbReference>
<dbReference type="SMR" id="Q5JJC3"/>
<dbReference type="FunCoup" id="Q5JJC3">
    <property type="interactions" value="104"/>
</dbReference>
<dbReference type="STRING" id="69014.TK1477"/>
<dbReference type="EnsemblBacteria" id="BAD85666">
    <property type="protein sequence ID" value="BAD85666"/>
    <property type="gene ID" value="TK1477"/>
</dbReference>
<dbReference type="KEGG" id="tko:TK1477"/>
<dbReference type="PATRIC" id="fig|69014.16.peg.1438"/>
<dbReference type="eggNOG" id="arCOG01728">
    <property type="taxonomic scope" value="Archaea"/>
</dbReference>
<dbReference type="HOGENOM" id="CLU_038085_2_0_2"/>
<dbReference type="InParanoid" id="Q5JJC3"/>
<dbReference type="OrthoDB" id="372162at2157"/>
<dbReference type="PhylomeDB" id="Q5JJC3"/>
<dbReference type="Proteomes" id="UP000000536">
    <property type="component" value="Chromosome"/>
</dbReference>
<dbReference type="CDD" id="cd07361">
    <property type="entry name" value="MEMO_like"/>
    <property type="match status" value="1"/>
</dbReference>
<dbReference type="Gene3D" id="3.40.830.10">
    <property type="entry name" value="LigB-like"/>
    <property type="match status" value="1"/>
</dbReference>
<dbReference type="HAMAP" id="MF_00055">
    <property type="entry name" value="MEMO1"/>
    <property type="match status" value="1"/>
</dbReference>
<dbReference type="InterPro" id="IPR002737">
    <property type="entry name" value="MEMO1_fam"/>
</dbReference>
<dbReference type="NCBIfam" id="TIGR04336">
    <property type="entry name" value="AmmeMemoSam_B"/>
    <property type="match status" value="1"/>
</dbReference>
<dbReference type="NCBIfam" id="NF001987">
    <property type="entry name" value="PRK00782.1"/>
    <property type="match status" value="1"/>
</dbReference>
<dbReference type="PANTHER" id="PTHR11060">
    <property type="entry name" value="PROTEIN MEMO1"/>
    <property type="match status" value="1"/>
</dbReference>
<dbReference type="PANTHER" id="PTHR11060:SF0">
    <property type="entry name" value="PROTEIN MEMO1"/>
    <property type="match status" value="1"/>
</dbReference>
<dbReference type="Pfam" id="PF01875">
    <property type="entry name" value="Memo"/>
    <property type="match status" value="1"/>
</dbReference>
<dbReference type="SUPFAM" id="SSF53213">
    <property type="entry name" value="LigB-like"/>
    <property type="match status" value="1"/>
</dbReference>
<name>Y1477_THEKO</name>
<organism>
    <name type="scientific">Thermococcus kodakarensis (strain ATCC BAA-918 / JCM 12380 / KOD1)</name>
    <name type="common">Pyrococcus kodakaraensis (strain KOD1)</name>
    <dbReference type="NCBI Taxonomy" id="69014"/>
    <lineage>
        <taxon>Archaea</taxon>
        <taxon>Methanobacteriati</taxon>
        <taxon>Methanobacteriota</taxon>
        <taxon>Thermococci</taxon>
        <taxon>Thermococcales</taxon>
        <taxon>Thermococcaceae</taxon>
        <taxon>Thermococcus</taxon>
    </lineage>
</organism>
<gene>
    <name type="ordered locus">TK1477</name>
</gene>